<evidence type="ECO:0000255" key="1">
    <source>
        <dbReference type="HAMAP-Rule" id="MF_00079"/>
    </source>
</evidence>
<gene>
    <name evidence="1" type="primary">hisG</name>
    <name type="ordered locus">Sbal_2425</name>
</gene>
<reference key="1">
    <citation type="submission" date="2007-02" db="EMBL/GenBank/DDBJ databases">
        <title>Complete sequence of chromosome of Shewanella baltica OS155.</title>
        <authorList>
            <consortium name="US DOE Joint Genome Institute"/>
            <person name="Copeland A."/>
            <person name="Lucas S."/>
            <person name="Lapidus A."/>
            <person name="Barry K."/>
            <person name="Detter J.C."/>
            <person name="Glavina del Rio T."/>
            <person name="Hammon N."/>
            <person name="Israni S."/>
            <person name="Dalin E."/>
            <person name="Tice H."/>
            <person name="Pitluck S."/>
            <person name="Sims D.R."/>
            <person name="Brettin T."/>
            <person name="Bruce D."/>
            <person name="Han C."/>
            <person name="Tapia R."/>
            <person name="Brainard J."/>
            <person name="Schmutz J."/>
            <person name="Larimer F."/>
            <person name="Land M."/>
            <person name="Hauser L."/>
            <person name="Kyrpides N."/>
            <person name="Mikhailova N."/>
            <person name="Brettar I."/>
            <person name="Klappenbach J."/>
            <person name="Konstantinidis K."/>
            <person name="Rodrigues J."/>
            <person name="Tiedje J."/>
            <person name="Richardson P."/>
        </authorList>
    </citation>
    <scope>NUCLEOTIDE SEQUENCE [LARGE SCALE GENOMIC DNA]</scope>
    <source>
        <strain>OS155 / ATCC BAA-1091</strain>
    </source>
</reference>
<name>HIS1_SHEB5</name>
<proteinExistence type="inferred from homology"/>
<organism>
    <name type="scientific">Shewanella baltica (strain OS155 / ATCC BAA-1091)</name>
    <dbReference type="NCBI Taxonomy" id="325240"/>
    <lineage>
        <taxon>Bacteria</taxon>
        <taxon>Pseudomonadati</taxon>
        <taxon>Pseudomonadota</taxon>
        <taxon>Gammaproteobacteria</taxon>
        <taxon>Alteromonadales</taxon>
        <taxon>Shewanellaceae</taxon>
        <taxon>Shewanella</taxon>
    </lineage>
</organism>
<dbReference type="EC" id="2.4.2.17" evidence="1"/>
<dbReference type="EMBL" id="CP000563">
    <property type="protein sequence ID" value="ABN61918.1"/>
    <property type="molecule type" value="Genomic_DNA"/>
</dbReference>
<dbReference type="RefSeq" id="WP_006086295.1">
    <property type="nucleotide sequence ID" value="NC_009052.1"/>
</dbReference>
<dbReference type="SMR" id="A3D5A5"/>
<dbReference type="STRING" id="325240.Sbal_2425"/>
<dbReference type="GeneID" id="11774808"/>
<dbReference type="KEGG" id="sbl:Sbal_2425"/>
<dbReference type="HOGENOM" id="CLU_038115_1_0_6"/>
<dbReference type="OrthoDB" id="9801867at2"/>
<dbReference type="UniPathway" id="UPA00031">
    <property type="reaction ID" value="UER00006"/>
</dbReference>
<dbReference type="Proteomes" id="UP000001557">
    <property type="component" value="Chromosome"/>
</dbReference>
<dbReference type="GO" id="GO:0005737">
    <property type="term" value="C:cytoplasm"/>
    <property type="evidence" value="ECO:0007669"/>
    <property type="project" value="UniProtKB-SubCell"/>
</dbReference>
<dbReference type="GO" id="GO:0005524">
    <property type="term" value="F:ATP binding"/>
    <property type="evidence" value="ECO:0007669"/>
    <property type="project" value="UniProtKB-KW"/>
</dbReference>
<dbReference type="GO" id="GO:0003879">
    <property type="term" value="F:ATP phosphoribosyltransferase activity"/>
    <property type="evidence" value="ECO:0007669"/>
    <property type="project" value="UniProtKB-UniRule"/>
</dbReference>
<dbReference type="GO" id="GO:0000287">
    <property type="term" value="F:magnesium ion binding"/>
    <property type="evidence" value="ECO:0007669"/>
    <property type="project" value="UniProtKB-UniRule"/>
</dbReference>
<dbReference type="GO" id="GO:0000105">
    <property type="term" value="P:L-histidine biosynthetic process"/>
    <property type="evidence" value="ECO:0007669"/>
    <property type="project" value="UniProtKB-UniRule"/>
</dbReference>
<dbReference type="FunFam" id="3.30.70.120:FF:000002">
    <property type="entry name" value="ATP phosphoribosyltransferase"/>
    <property type="match status" value="1"/>
</dbReference>
<dbReference type="FunFam" id="3.40.190.10:FF:000008">
    <property type="entry name" value="ATP phosphoribosyltransferase"/>
    <property type="match status" value="1"/>
</dbReference>
<dbReference type="Gene3D" id="3.30.70.120">
    <property type="match status" value="1"/>
</dbReference>
<dbReference type="Gene3D" id="3.40.190.10">
    <property type="entry name" value="Periplasmic binding protein-like II"/>
    <property type="match status" value="2"/>
</dbReference>
<dbReference type="HAMAP" id="MF_00079">
    <property type="entry name" value="HisG_Long"/>
    <property type="match status" value="1"/>
</dbReference>
<dbReference type="InterPro" id="IPR020621">
    <property type="entry name" value="ATP-PRT_HisG_long"/>
</dbReference>
<dbReference type="InterPro" id="IPR013820">
    <property type="entry name" value="ATP_PRibTrfase_cat"/>
</dbReference>
<dbReference type="InterPro" id="IPR018198">
    <property type="entry name" value="ATP_PRibTrfase_CS"/>
</dbReference>
<dbReference type="InterPro" id="IPR001348">
    <property type="entry name" value="ATP_PRibTrfase_HisG"/>
</dbReference>
<dbReference type="InterPro" id="IPR013115">
    <property type="entry name" value="HisG_C"/>
</dbReference>
<dbReference type="InterPro" id="IPR011322">
    <property type="entry name" value="N-reg_PII-like_a/b"/>
</dbReference>
<dbReference type="InterPro" id="IPR015867">
    <property type="entry name" value="N-reg_PII/ATP_PRibTrfase_C"/>
</dbReference>
<dbReference type="NCBIfam" id="TIGR00070">
    <property type="entry name" value="hisG"/>
    <property type="match status" value="1"/>
</dbReference>
<dbReference type="NCBIfam" id="TIGR03455">
    <property type="entry name" value="HisG_C-term"/>
    <property type="match status" value="1"/>
</dbReference>
<dbReference type="PANTHER" id="PTHR21403:SF8">
    <property type="entry name" value="ATP PHOSPHORIBOSYLTRANSFERASE"/>
    <property type="match status" value="1"/>
</dbReference>
<dbReference type="PANTHER" id="PTHR21403">
    <property type="entry name" value="ATP PHOSPHORIBOSYLTRANSFERASE ATP-PRTASE"/>
    <property type="match status" value="1"/>
</dbReference>
<dbReference type="Pfam" id="PF01634">
    <property type="entry name" value="HisG"/>
    <property type="match status" value="1"/>
</dbReference>
<dbReference type="Pfam" id="PF08029">
    <property type="entry name" value="HisG_C"/>
    <property type="match status" value="1"/>
</dbReference>
<dbReference type="SUPFAM" id="SSF54913">
    <property type="entry name" value="GlnB-like"/>
    <property type="match status" value="1"/>
</dbReference>
<dbReference type="SUPFAM" id="SSF53850">
    <property type="entry name" value="Periplasmic binding protein-like II"/>
    <property type="match status" value="1"/>
</dbReference>
<dbReference type="PROSITE" id="PS01316">
    <property type="entry name" value="ATP_P_PHORIBOSYLTR"/>
    <property type="match status" value="1"/>
</dbReference>
<sequence>MTESNRLRIAIQKSGRLSTDSQQLLKSCGVKFSINEQRLIAHADNMPIDLLRVRDDDIPGLVMDGVVDMGIIGENVLEEEQIERQTLNKPADCLKLRQLDFGSCRLSLAVPTEFSYADASSLEGLRIATSYPNLLRRFMQQKGITYRDCMLKGSVEVAPRAGLADGICDLVSTGATLEANGLYETEVIYRSMACIIQSTQTQTPTKQALIDKILSRVNGVIRARESKYILLHAPTETLDQIVALLPGAENPTVLPLNDDTNRVAIHAVSTEDLFWDTMEQLTALGASSILVMPIEKMMG</sequence>
<feature type="chain" id="PRO_1000004499" description="ATP phosphoribosyltransferase">
    <location>
        <begin position="1"/>
        <end position="299"/>
    </location>
</feature>
<protein>
    <recommendedName>
        <fullName evidence="1">ATP phosphoribosyltransferase</fullName>
        <shortName evidence="1">ATP-PRT</shortName>
        <shortName evidence="1">ATP-PRTase</shortName>
        <ecNumber evidence="1">2.4.2.17</ecNumber>
    </recommendedName>
</protein>
<accession>A3D5A5</accession>
<keyword id="KW-0028">Amino-acid biosynthesis</keyword>
<keyword id="KW-0067">ATP-binding</keyword>
<keyword id="KW-0963">Cytoplasm</keyword>
<keyword id="KW-0328">Glycosyltransferase</keyword>
<keyword id="KW-0368">Histidine biosynthesis</keyword>
<keyword id="KW-0460">Magnesium</keyword>
<keyword id="KW-0479">Metal-binding</keyword>
<keyword id="KW-0547">Nucleotide-binding</keyword>
<keyword id="KW-1185">Reference proteome</keyword>
<keyword id="KW-0808">Transferase</keyword>
<comment type="function">
    <text evidence="1">Catalyzes the condensation of ATP and 5-phosphoribose 1-diphosphate to form N'-(5'-phosphoribosyl)-ATP (PR-ATP). Has a crucial role in the pathway because the rate of histidine biosynthesis seems to be controlled primarily by regulation of HisG enzymatic activity.</text>
</comment>
<comment type="catalytic activity">
    <reaction evidence="1">
        <text>1-(5-phospho-beta-D-ribosyl)-ATP + diphosphate = 5-phospho-alpha-D-ribose 1-diphosphate + ATP</text>
        <dbReference type="Rhea" id="RHEA:18473"/>
        <dbReference type="ChEBI" id="CHEBI:30616"/>
        <dbReference type="ChEBI" id="CHEBI:33019"/>
        <dbReference type="ChEBI" id="CHEBI:58017"/>
        <dbReference type="ChEBI" id="CHEBI:73183"/>
        <dbReference type="EC" id="2.4.2.17"/>
    </reaction>
</comment>
<comment type="cofactor">
    <cofactor evidence="1">
        <name>Mg(2+)</name>
        <dbReference type="ChEBI" id="CHEBI:18420"/>
    </cofactor>
</comment>
<comment type="activity regulation">
    <text evidence="1">Feedback inhibited by histidine.</text>
</comment>
<comment type="pathway">
    <text evidence="1">Amino-acid biosynthesis; L-histidine biosynthesis; L-histidine from 5-phospho-alpha-D-ribose 1-diphosphate: step 1/9.</text>
</comment>
<comment type="subcellular location">
    <subcellularLocation>
        <location evidence="1">Cytoplasm</location>
    </subcellularLocation>
</comment>
<comment type="similarity">
    <text evidence="1">Belongs to the ATP phosphoribosyltransferase family. Long subfamily.</text>
</comment>